<accession>A8Z446</accession>
<reference key="1">
    <citation type="journal article" date="2007" name="BMC Microbiol.">
        <title>Subtle genetic changes enhance virulence of methicillin resistant and sensitive Staphylococcus aureus.</title>
        <authorList>
            <person name="Highlander S.K."/>
            <person name="Hulten K.G."/>
            <person name="Qin X."/>
            <person name="Jiang H."/>
            <person name="Yerrapragada S."/>
            <person name="Mason E.O. Jr."/>
            <person name="Shang Y."/>
            <person name="Williams T.M."/>
            <person name="Fortunov R.M."/>
            <person name="Liu Y."/>
            <person name="Igboeli O."/>
            <person name="Petrosino J."/>
            <person name="Tirumalai M."/>
            <person name="Uzman A."/>
            <person name="Fox G.E."/>
            <person name="Cardenas A.M."/>
            <person name="Muzny D.M."/>
            <person name="Hemphill L."/>
            <person name="Ding Y."/>
            <person name="Dugan S."/>
            <person name="Blyth P.R."/>
            <person name="Buhay C.J."/>
            <person name="Dinh H.H."/>
            <person name="Hawes A.C."/>
            <person name="Holder M."/>
            <person name="Kovar C.L."/>
            <person name="Lee S.L."/>
            <person name="Liu W."/>
            <person name="Nazareth L.V."/>
            <person name="Wang Q."/>
            <person name="Zhou J."/>
            <person name="Kaplan S.L."/>
            <person name="Weinstock G.M."/>
        </authorList>
    </citation>
    <scope>NUCLEOTIDE SEQUENCE [LARGE SCALE GENOMIC DNA]</scope>
    <source>
        <strain>USA300 / TCH1516</strain>
    </source>
</reference>
<name>AROC_STAAT</name>
<protein>
    <recommendedName>
        <fullName evidence="1">Chorismate synthase</fullName>
        <shortName evidence="1">CS</shortName>
        <ecNumber evidence="1">4.2.3.5</ecNumber>
    </recommendedName>
    <alternativeName>
        <fullName evidence="1">5-enolpyruvylshikimate-3-phosphate phospholyase</fullName>
    </alternativeName>
</protein>
<gene>
    <name evidence="1" type="primary">aroC</name>
    <name type="ordered locus">USA300HOU_1404</name>
</gene>
<comment type="function">
    <text evidence="1">Catalyzes the anti-1,4-elimination of the C-3 phosphate and the C-6 proR hydrogen from 5-enolpyruvylshikimate-3-phosphate (EPSP) to yield chorismate, which is the branch point compound that serves as the starting substrate for the three terminal pathways of aromatic amino acid biosynthesis. This reaction introduces a second double bond into the aromatic ring system.</text>
</comment>
<comment type="catalytic activity">
    <reaction evidence="1">
        <text>5-O-(1-carboxyvinyl)-3-phosphoshikimate = chorismate + phosphate</text>
        <dbReference type="Rhea" id="RHEA:21020"/>
        <dbReference type="ChEBI" id="CHEBI:29748"/>
        <dbReference type="ChEBI" id="CHEBI:43474"/>
        <dbReference type="ChEBI" id="CHEBI:57701"/>
        <dbReference type="EC" id="4.2.3.5"/>
    </reaction>
</comment>
<comment type="cofactor">
    <cofactor evidence="1">
        <name>FMNH2</name>
        <dbReference type="ChEBI" id="CHEBI:57618"/>
    </cofactor>
    <text evidence="1">Reduced FMN (FMNH(2)).</text>
</comment>
<comment type="pathway">
    <text evidence="1">Metabolic intermediate biosynthesis; chorismate biosynthesis; chorismate from D-erythrose 4-phosphate and phosphoenolpyruvate: step 7/7.</text>
</comment>
<comment type="subunit">
    <text evidence="1">Homotetramer.</text>
</comment>
<comment type="similarity">
    <text evidence="1">Belongs to the chorismate synthase family.</text>
</comment>
<dbReference type="EC" id="4.2.3.5" evidence="1"/>
<dbReference type="EMBL" id="CP000730">
    <property type="protein sequence ID" value="ABX29414.1"/>
    <property type="molecule type" value="Genomic_DNA"/>
</dbReference>
<dbReference type="RefSeq" id="WP_001269929.1">
    <property type="nucleotide sequence ID" value="NC_010079.1"/>
</dbReference>
<dbReference type="SMR" id="A8Z446"/>
<dbReference type="KEGG" id="sax:USA300HOU_1404"/>
<dbReference type="HOGENOM" id="CLU_034547_2_0_9"/>
<dbReference type="UniPathway" id="UPA00053">
    <property type="reaction ID" value="UER00090"/>
</dbReference>
<dbReference type="GO" id="GO:0005829">
    <property type="term" value="C:cytosol"/>
    <property type="evidence" value="ECO:0007669"/>
    <property type="project" value="TreeGrafter"/>
</dbReference>
<dbReference type="GO" id="GO:0004107">
    <property type="term" value="F:chorismate synthase activity"/>
    <property type="evidence" value="ECO:0007669"/>
    <property type="project" value="UniProtKB-UniRule"/>
</dbReference>
<dbReference type="GO" id="GO:0010181">
    <property type="term" value="F:FMN binding"/>
    <property type="evidence" value="ECO:0007669"/>
    <property type="project" value="TreeGrafter"/>
</dbReference>
<dbReference type="GO" id="GO:0008652">
    <property type="term" value="P:amino acid biosynthetic process"/>
    <property type="evidence" value="ECO:0007669"/>
    <property type="project" value="UniProtKB-KW"/>
</dbReference>
<dbReference type="GO" id="GO:0009073">
    <property type="term" value="P:aromatic amino acid family biosynthetic process"/>
    <property type="evidence" value="ECO:0007669"/>
    <property type="project" value="UniProtKB-KW"/>
</dbReference>
<dbReference type="GO" id="GO:0009423">
    <property type="term" value="P:chorismate biosynthetic process"/>
    <property type="evidence" value="ECO:0007669"/>
    <property type="project" value="UniProtKB-UniRule"/>
</dbReference>
<dbReference type="CDD" id="cd07304">
    <property type="entry name" value="Chorismate_synthase"/>
    <property type="match status" value="1"/>
</dbReference>
<dbReference type="FunFam" id="3.60.150.10:FF:000002">
    <property type="entry name" value="Chorismate synthase"/>
    <property type="match status" value="1"/>
</dbReference>
<dbReference type="Gene3D" id="3.60.150.10">
    <property type="entry name" value="Chorismate synthase AroC"/>
    <property type="match status" value="1"/>
</dbReference>
<dbReference type="HAMAP" id="MF_00300">
    <property type="entry name" value="Chorismate_synth"/>
    <property type="match status" value="1"/>
</dbReference>
<dbReference type="InterPro" id="IPR000453">
    <property type="entry name" value="Chorismate_synth"/>
</dbReference>
<dbReference type="InterPro" id="IPR035904">
    <property type="entry name" value="Chorismate_synth_AroC_sf"/>
</dbReference>
<dbReference type="InterPro" id="IPR020541">
    <property type="entry name" value="Chorismate_synthase_CS"/>
</dbReference>
<dbReference type="NCBIfam" id="TIGR00033">
    <property type="entry name" value="aroC"/>
    <property type="match status" value="1"/>
</dbReference>
<dbReference type="NCBIfam" id="NF003793">
    <property type="entry name" value="PRK05382.1"/>
    <property type="match status" value="1"/>
</dbReference>
<dbReference type="PANTHER" id="PTHR21085">
    <property type="entry name" value="CHORISMATE SYNTHASE"/>
    <property type="match status" value="1"/>
</dbReference>
<dbReference type="PANTHER" id="PTHR21085:SF0">
    <property type="entry name" value="CHORISMATE SYNTHASE"/>
    <property type="match status" value="1"/>
</dbReference>
<dbReference type="Pfam" id="PF01264">
    <property type="entry name" value="Chorismate_synt"/>
    <property type="match status" value="1"/>
</dbReference>
<dbReference type="PIRSF" id="PIRSF001456">
    <property type="entry name" value="Chorismate_synth"/>
    <property type="match status" value="1"/>
</dbReference>
<dbReference type="SUPFAM" id="SSF103263">
    <property type="entry name" value="Chorismate synthase, AroC"/>
    <property type="match status" value="1"/>
</dbReference>
<dbReference type="PROSITE" id="PS00787">
    <property type="entry name" value="CHORISMATE_SYNTHASE_1"/>
    <property type="match status" value="1"/>
</dbReference>
<dbReference type="PROSITE" id="PS00788">
    <property type="entry name" value="CHORISMATE_SYNTHASE_2"/>
    <property type="match status" value="1"/>
</dbReference>
<dbReference type="PROSITE" id="PS00789">
    <property type="entry name" value="CHORISMATE_SYNTHASE_3"/>
    <property type="match status" value="1"/>
</dbReference>
<proteinExistence type="inferred from homology"/>
<evidence type="ECO:0000255" key="1">
    <source>
        <dbReference type="HAMAP-Rule" id="MF_00300"/>
    </source>
</evidence>
<keyword id="KW-0028">Amino-acid biosynthesis</keyword>
<keyword id="KW-0057">Aromatic amino acid biosynthesis</keyword>
<keyword id="KW-0274">FAD</keyword>
<keyword id="KW-0285">Flavoprotein</keyword>
<keyword id="KW-0288">FMN</keyword>
<keyword id="KW-0456">Lyase</keyword>
<keyword id="KW-0521">NADP</keyword>
<sequence length="388" mass="43047">MRYLTSGESHGPQLTVIVEGVPANIEIKVEDINKEMFKRQGGYGRGRRMQIEKDTVEIVSGVRNGYTLGSPITMVVTNDDFTHWRKIMGAAPISEEERENMKRTITKPRPGHADLVGGMKYNHRDLRNVLERSSARETAARVAVGALCKVLLQQLDIDIYSRVVEIGGIKDKDFYDSETFKANLDRNDVRVIDDSIAQAMRDKIDEAKNEGDSIGGVVQVVVENMPVGVGSYVHYDRKLDGKIAQGVVSINAFKGVSFGEGFKAAEKPGSEIQDEILYNSEIGYYRGSNHLGGLEGGMSNGMPIIVNGVMKPIPTLYKPLNSVDINTKEDFKATIERSDSCAVPAASIVCEHVVAFEIAKALLEEFQSNHIEQLKQQIIERRQLNIEF</sequence>
<feature type="chain" id="PRO_1000079013" description="Chorismate synthase">
    <location>
        <begin position="1"/>
        <end position="388"/>
    </location>
</feature>
<feature type="binding site" evidence="1">
    <location>
        <position position="39"/>
    </location>
    <ligand>
        <name>NADP(+)</name>
        <dbReference type="ChEBI" id="CHEBI:58349"/>
    </ligand>
</feature>
<feature type="binding site" evidence="1">
    <location>
        <position position="45"/>
    </location>
    <ligand>
        <name>NADP(+)</name>
        <dbReference type="ChEBI" id="CHEBI:58349"/>
    </ligand>
</feature>
<feature type="binding site" evidence="1">
    <location>
        <begin position="132"/>
        <end position="134"/>
    </location>
    <ligand>
        <name>FMN</name>
        <dbReference type="ChEBI" id="CHEBI:58210"/>
    </ligand>
</feature>
<feature type="binding site" evidence="1">
    <location>
        <begin position="251"/>
        <end position="252"/>
    </location>
    <ligand>
        <name>FMN</name>
        <dbReference type="ChEBI" id="CHEBI:58210"/>
    </ligand>
</feature>
<feature type="binding site" evidence="1">
    <location>
        <position position="296"/>
    </location>
    <ligand>
        <name>FMN</name>
        <dbReference type="ChEBI" id="CHEBI:58210"/>
    </ligand>
</feature>
<feature type="binding site" evidence="1">
    <location>
        <begin position="311"/>
        <end position="315"/>
    </location>
    <ligand>
        <name>FMN</name>
        <dbReference type="ChEBI" id="CHEBI:58210"/>
    </ligand>
</feature>
<feature type="binding site" evidence="1">
    <location>
        <position position="337"/>
    </location>
    <ligand>
        <name>FMN</name>
        <dbReference type="ChEBI" id="CHEBI:58210"/>
    </ligand>
</feature>
<organism>
    <name type="scientific">Staphylococcus aureus (strain USA300 / TCH1516)</name>
    <dbReference type="NCBI Taxonomy" id="451516"/>
    <lineage>
        <taxon>Bacteria</taxon>
        <taxon>Bacillati</taxon>
        <taxon>Bacillota</taxon>
        <taxon>Bacilli</taxon>
        <taxon>Bacillales</taxon>
        <taxon>Staphylococcaceae</taxon>
        <taxon>Staphylococcus</taxon>
    </lineage>
</organism>